<protein>
    <recommendedName>
        <fullName>Urotensin-2B</fullName>
    </recommendedName>
    <alternativeName>
        <fullName>Urotensin II-related peptide</fullName>
    </alternativeName>
    <alternativeName>
        <fullName>Urotensin IIB</fullName>
        <shortName>U-IIB</shortName>
        <shortName>UIIB</shortName>
    </alternativeName>
    <alternativeName>
        <fullName>Urotensin-2 domain-containing protein</fullName>
    </alternativeName>
</protein>
<dbReference type="EMBL" id="AB116021">
    <property type="protein sequence ID" value="BAC98929.1"/>
    <property type="molecule type" value="mRNA"/>
</dbReference>
<dbReference type="EMBL" id="AY321313">
    <property type="protein sequence ID" value="AAQ83883.1"/>
    <property type="molecule type" value="mRNA"/>
</dbReference>
<dbReference type="EMBL" id="AK090630">
    <property type="protein sequence ID" value="BAG52200.1"/>
    <property type="molecule type" value="mRNA"/>
</dbReference>
<dbReference type="EMBL" id="CH471052">
    <property type="protein sequence ID" value="EAW78091.1"/>
    <property type="molecule type" value="Genomic_DNA"/>
</dbReference>
<dbReference type="EMBL" id="CH471052">
    <property type="protein sequence ID" value="EAW78092.1"/>
    <property type="molecule type" value="Genomic_DNA"/>
</dbReference>
<dbReference type="EMBL" id="CH471052">
    <property type="protein sequence ID" value="EAW78093.1"/>
    <property type="molecule type" value="Genomic_DNA"/>
</dbReference>
<dbReference type="EMBL" id="CH471052">
    <property type="protein sequence ID" value="EAW78094.1"/>
    <property type="molecule type" value="Genomic_DNA"/>
</dbReference>
<dbReference type="EMBL" id="BC112166">
    <property type="protein sequence ID" value="AAI12167.1"/>
    <property type="molecule type" value="mRNA"/>
</dbReference>
<dbReference type="CCDS" id="CCDS3300.1"/>
<dbReference type="RefSeq" id="NP_937795.2">
    <property type="nucleotide sequence ID" value="NM_198152.5"/>
</dbReference>
<dbReference type="RefSeq" id="XP_011510933.1">
    <property type="nucleotide sequence ID" value="XM_011512631.3"/>
</dbReference>
<dbReference type="RefSeq" id="XP_047303855.1">
    <property type="nucleotide sequence ID" value="XM_047447899.1"/>
</dbReference>
<dbReference type="BioGRID" id="129211">
    <property type="interactions" value="2"/>
</dbReference>
<dbReference type="FunCoup" id="Q765I0">
    <property type="interactions" value="498"/>
</dbReference>
<dbReference type="IntAct" id="Q765I0">
    <property type="interactions" value="1"/>
</dbReference>
<dbReference type="STRING" id="9606.ENSP00000340526"/>
<dbReference type="PhosphoSitePlus" id="Q765I0"/>
<dbReference type="BioMuta" id="UTS2B"/>
<dbReference type="DMDM" id="212287929"/>
<dbReference type="jPOST" id="Q765I0"/>
<dbReference type="MassIVE" id="Q765I0"/>
<dbReference type="PaxDb" id="9606-ENSP00000340526"/>
<dbReference type="Antibodypedia" id="19374">
    <property type="antibodies" value="118 antibodies from 18 providers"/>
</dbReference>
<dbReference type="DNASU" id="257313"/>
<dbReference type="Ensembl" id="ENST00000340524.10">
    <property type="protein sequence ID" value="ENSP00000340526.5"/>
    <property type="gene ID" value="ENSG00000188958.10"/>
</dbReference>
<dbReference type="Ensembl" id="ENST00000427544.6">
    <property type="protein sequence ID" value="ENSP00000398761.2"/>
    <property type="gene ID" value="ENSG00000188958.10"/>
</dbReference>
<dbReference type="GeneID" id="257313"/>
<dbReference type="KEGG" id="hsa:257313"/>
<dbReference type="MANE-Select" id="ENST00000340524.10">
    <property type="protein sequence ID" value="ENSP00000340526.5"/>
    <property type="RefSeq nucleotide sequence ID" value="NM_198152.5"/>
    <property type="RefSeq protein sequence ID" value="NP_937795.2"/>
</dbReference>
<dbReference type="UCSC" id="uc003fsu.4">
    <property type="organism name" value="human"/>
</dbReference>
<dbReference type="AGR" id="HGNC:30894"/>
<dbReference type="CTD" id="257313"/>
<dbReference type="DisGeNET" id="257313"/>
<dbReference type="GeneCards" id="UTS2B"/>
<dbReference type="HGNC" id="HGNC:30894">
    <property type="gene designation" value="UTS2B"/>
</dbReference>
<dbReference type="HPA" id="ENSG00000188958">
    <property type="expression patterns" value="Tissue enhanced (intestine, retina)"/>
</dbReference>
<dbReference type="MIM" id="618134">
    <property type="type" value="gene"/>
</dbReference>
<dbReference type="neXtProt" id="NX_Q765I0"/>
<dbReference type="OpenTargets" id="ENSG00000188958"/>
<dbReference type="PharmGKB" id="PA142670632"/>
<dbReference type="VEuPathDB" id="HostDB:ENSG00000188958"/>
<dbReference type="eggNOG" id="ENOG502S3JR">
    <property type="taxonomic scope" value="Eukaryota"/>
</dbReference>
<dbReference type="GeneTree" id="ENSGT00390000003511"/>
<dbReference type="HOGENOM" id="CLU_2060777_0_0_1"/>
<dbReference type="InParanoid" id="Q765I0"/>
<dbReference type="OMA" id="TMALCVP"/>
<dbReference type="OrthoDB" id="9890208at2759"/>
<dbReference type="PAN-GO" id="Q765I0">
    <property type="GO annotations" value="2 GO annotations based on evolutionary models"/>
</dbReference>
<dbReference type="PhylomeDB" id="Q765I0"/>
<dbReference type="TreeFam" id="TF338338"/>
<dbReference type="PathwayCommons" id="Q765I0"/>
<dbReference type="Reactome" id="R-HSA-375276">
    <property type="pathway name" value="Peptide ligand-binding receptors"/>
</dbReference>
<dbReference type="Reactome" id="R-HSA-416476">
    <property type="pathway name" value="G alpha (q) signalling events"/>
</dbReference>
<dbReference type="SignaLink" id="Q765I0"/>
<dbReference type="BioGRID-ORCS" id="257313">
    <property type="hits" value="10 hits in 1105 CRISPR screens"/>
</dbReference>
<dbReference type="ChiTaRS" id="UTS2B">
    <property type="organism name" value="human"/>
</dbReference>
<dbReference type="GenomeRNAi" id="257313"/>
<dbReference type="Pharos" id="Q765I0">
    <property type="development level" value="Tbio"/>
</dbReference>
<dbReference type="PRO" id="PR:Q765I0"/>
<dbReference type="Proteomes" id="UP000005640">
    <property type="component" value="Chromosome 3"/>
</dbReference>
<dbReference type="RNAct" id="Q765I0">
    <property type="molecule type" value="protein"/>
</dbReference>
<dbReference type="Bgee" id="ENSG00000188958">
    <property type="expression patterns" value="Expressed in male germ line stem cell (sensu Vertebrata) in testis and 94 other cell types or tissues"/>
</dbReference>
<dbReference type="ExpressionAtlas" id="Q765I0">
    <property type="expression patterns" value="baseline and differential"/>
</dbReference>
<dbReference type="GO" id="GO:0005576">
    <property type="term" value="C:extracellular region"/>
    <property type="evidence" value="ECO:0000304"/>
    <property type="project" value="Reactome"/>
</dbReference>
<dbReference type="GO" id="GO:0001664">
    <property type="term" value="F:G protein-coupled receptor binding"/>
    <property type="evidence" value="ECO:0000318"/>
    <property type="project" value="GO_Central"/>
</dbReference>
<dbReference type="GO" id="GO:0005179">
    <property type="term" value="F:hormone activity"/>
    <property type="evidence" value="ECO:0007669"/>
    <property type="project" value="UniProtKB-KW"/>
</dbReference>
<dbReference type="GO" id="GO:0097746">
    <property type="term" value="P:blood vessel diameter maintenance"/>
    <property type="evidence" value="ECO:0007669"/>
    <property type="project" value="InterPro"/>
</dbReference>
<dbReference type="GO" id="GO:0008217">
    <property type="term" value="P:regulation of blood pressure"/>
    <property type="evidence" value="ECO:0000318"/>
    <property type="project" value="GO_Central"/>
</dbReference>
<dbReference type="InterPro" id="IPR043255">
    <property type="entry name" value="U-IIB"/>
</dbReference>
<dbReference type="InterPro" id="IPR001483">
    <property type="entry name" value="Urotensin_II"/>
</dbReference>
<dbReference type="PANTHER" id="PTHR36876">
    <property type="entry name" value="UROTENSIN-2B"/>
    <property type="match status" value="1"/>
</dbReference>
<dbReference type="PANTHER" id="PTHR36876:SF1">
    <property type="entry name" value="UROTENSIN-2B"/>
    <property type="match status" value="1"/>
</dbReference>
<dbReference type="PROSITE" id="PS00984">
    <property type="entry name" value="UROTENSIN_II"/>
    <property type="match status" value="1"/>
</dbReference>
<accession>Q765I0</accession>
<accession>B3KQY8</accession>
<accession>D3DNW1</accession>
<accession>Q2M1Z2</accession>
<keyword id="KW-0165">Cleavage on pair of basic residues</keyword>
<keyword id="KW-1015">Disulfide bond</keyword>
<keyword id="KW-0372">Hormone</keyword>
<keyword id="KW-1185">Reference proteome</keyword>
<keyword id="KW-0964">Secreted</keyword>
<keyword id="KW-0732">Signal</keyword>
<organism>
    <name type="scientific">Homo sapiens</name>
    <name type="common">Human</name>
    <dbReference type="NCBI Taxonomy" id="9606"/>
    <lineage>
        <taxon>Eukaryota</taxon>
        <taxon>Metazoa</taxon>
        <taxon>Chordata</taxon>
        <taxon>Craniata</taxon>
        <taxon>Vertebrata</taxon>
        <taxon>Euteleostomi</taxon>
        <taxon>Mammalia</taxon>
        <taxon>Eutheria</taxon>
        <taxon>Euarchontoglires</taxon>
        <taxon>Primates</taxon>
        <taxon>Haplorrhini</taxon>
        <taxon>Catarrhini</taxon>
        <taxon>Hominidae</taxon>
        <taxon>Homo</taxon>
    </lineage>
</organism>
<gene>
    <name type="primary">UTS2B</name>
    <name type="synonym">URP</name>
    <name type="synonym">UTS2D</name>
</gene>
<sequence>MNKILSSTVCFGLLTLLSVLSFLQSVHGRPYLTQGNEIFPDKKYTNREELLLALLNKNFDFQRPFNTDLALPNKLEELNQLEKLKEQLVEEKDSETSYAVDGLFSSHPSKRACFWKYCV</sequence>
<feature type="signal peptide" evidence="2">
    <location>
        <begin position="1"/>
        <end position="28"/>
    </location>
</feature>
<feature type="propeptide" id="PRO_0000036357" evidence="1">
    <location>
        <begin position="29"/>
        <end position="109"/>
    </location>
</feature>
<feature type="peptide" id="PRO_0000036358" description="Urotensin-2B">
    <location>
        <begin position="112"/>
        <end position="119"/>
    </location>
</feature>
<feature type="disulfide bond" evidence="1">
    <location>
        <begin position="113"/>
        <end position="118"/>
    </location>
</feature>
<feature type="sequence variant" id="VAR_044517" description="In dbSNP:rs6788319." evidence="3 4 5">
    <original>S</original>
    <variation>I</variation>
    <location>
        <position position="21"/>
    </location>
</feature>
<name>UTS2B_HUMAN</name>
<proteinExistence type="inferred from homology"/>
<evidence type="ECO:0000250" key="1"/>
<evidence type="ECO:0000255" key="2"/>
<evidence type="ECO:0000269" key="3">
    <source>
    </source>
</evidence>
<evidence type="ECO:0000269" key="4">
    <source>
    </source>
</evidence>
<evidence type="ECO:0000269" key="5">
    <source ref="2"/>
</evidence>
<evidence type="ECO:0000305" key="6"/>
<reference key="1">
    <citation type="journal article" date="2003" name="Biochem. Biophys. Res. Commun.">
        <title>Identification of urotensin II-related peptide as the urotensin II-immunoreactive molecule in the rat brain.</title>
        <authorList>
            <person name="Sugo T."/>
            <person name="Murakami Y."/>
            <person name="Shimomura Y."/>
            <person name="Harada M."/>
            <person name="Abe M."/>
            <person name="Ishibashi Y."/>
            <person name="Kitada C."/>
            <person name="Miyajima N."/>
            <person name="Suzuki N."/>
            <person name="Mori M."/>
            <person name="Fujino M."/>
        </authorList>
    </citation>
    <scope>NUCLEOTIDE SEQUENCE [MRNA]</scope>
    <scope>VARIANT ILE-21</scope>
    <source>
        <tissue>Brain</tissue>
    </source>
</reference>
<reference key="2">
    <citation type="submission" date="2003-06" db="EMBL/GenBank/DDBJ databases">
        <title>Characterization of a novel urotensin II precursor: urotensin II B (U2B).</title>
        <authorList>
            <person name="Nothacker H.-P."/>
            <person name="Civelli O."/>
        </authorList>
    </citation>
    <scope>NUCLEOTIDE SEQUENCE [MRNA]</scope>
    <scope>VARIANT ILE-21</scope>
</reference>
<reference key="3">
    <citation type="journal article" date="2004" name="Nat. Genet.">
        <title>Complete sequencing and characterization of 21,243 full-length human cDNAs.</title>
        <authorList>
            <person name="Ota T."/>
            <person name="Suzuki Y."/>
            <person name="Nishikawa T."/>
            <person name="Otsuki T."/>
            <person name="Sugiyama T."/>
            <person name="Irie R."/>
            <person name="Wakamatsu A."/>
            <person name="Hayashi K."/>
            <person name="Sato H."/>
            <person name="Nagai K."/>
            <person name="Kimura K."/>
            <person name="Makita H."/>
            <person name="Sekine M."/>
            <person name="Obayashi M."/>
            <person name="Nishi T."/>
            <person name="Shibahara T."/>
            <person name="Tanaka T."/>
            <person name="Ishii S."/>
            <person name="Yamamoto J."/>
            <person name="Saito K."/>
            <person name="Kawai Y."/>
            <person name="Isono Y."/>
            <person name="Nakamura Y."/>
            <person name="Nagahari K."/>
            <person name="Murakami K."/>
            <person name="Yasuda T."/>
            <person name="Iwayanagi T."/>
            <person name="Wagatsuma M."/>
            <person name="Shiratori A."/>
            <person name="Sudo H."/>
            <person name="Hosoiri T."/>
            <person name="Kaku Y."/>
            <person name="Kodaira H."/>
            <person name="Kondo H."/>
            <person name="Sugawara M."/>
            <person name="Takahashi M."/>
            <person name="Kanda K."/>
            <person name="Yokoi T."/>
            <person name="Furuya T."/>
            <person name="Kikkawa E."/>
            <person name="Omura Y."/>
            <person name="Abe K."/>
            <person name="Kamihara K."/>
            <person name="Katsuta N."/>
            <person name="Sato K."/>
            <person name="Tanikawa M."/>
            <person name="Yamazaki M."/>
            <person name="Ninomiya K."/>
            <person name="Ishibashi T."/>
            <person name="Yamashita H."/>
            <person name="Murakawa K."/>
            <person name="Fujimori K."/>
            <person name="Tanai H."/>
            <person name="Kimata M."/>
            <person name="Watanabe M."/>
            <person name="Hiraoka S."/>
            <person name="Chiba Y."/>
            <person name="Ishida S."/>
            <person name="Ono Y."/>
            <person name="Takiguchi S."/>
            <person name="Watanabe S."/>
            <person name="Yosida M."/>
            <person name="Hotuta T."/>
            <person name="Kusano J."/>
            <person name="Kanehori K."/>
            <person name="Takahashi-Fujii A."/>
            <person name="Hara H."/>
            <person name="Tanase T.-O."/>
            <person name="Nomura Y."/>
            <person name="Togiya S."/>
            <person name="Komai F."/>
            <person name="Hara R."/>
            <person name="Takeuchi K."/>
            <person name="Arita M."/>
            <person name="Imose N."/>
            <person name="Musashino K."/>
            <person name="Yuuki H."/>
            <person name="Oshima A."/>
            <person name="Sasaki N."/>
            <person name="Aotsuka S."/>
            <person name="Yoshikawa Y."/>
            <person name="Matsunawa H."/>
            <person name="Ichihara T."/>
            <person name="Shiohata N."/>
            <person name="Sano S."/>
            <person name="Moriya S."/>
            <person name="Momiyama H."/>
            <person name="Satoh N."/>
            <person name="Takami S."/>
            <person name="Terashima Y."/>
            <person name="Suzuki O."/>
            <person name="Nakagawa S."/>
            <person name="Senoh A."/>
            <person name="Mizoguchi H."/>
            <person name="Goto Y."/>
            <person name="Shimizu F."/>
            <person name="Wakebe H."/>
            <person name="Hishigaki H."/>
            <person name="Watanabe T."/>
            <person name="Sugiyama A."/>
            <person name="Takemoto M."/>
            <person name="Kawakami B."/>
            <person name="Yamazaki M."/>
            <person name="Watanabe K."/>
            <person name="Kumagai A."/>
            <person name="Itakura S."/>
            <person name="Fukuzumi Y."/>
            <person name="Fujimori Y."/>
            <person name="Komiyama M."/>
            <person name="Tashiro H."/>
            <person name="Tanigami A."/>
            <person name="Fujiwara T."/>
            <person name="Ono T."/>
            <person name="Yamada K."/>
            <person name="Fujii Y."/>
            <person name="Ozaki K."/>
            <person name="Hirao M."/>
            <person name="Ohmori Y."/>
            <person name="Kawabata A."/>
            <person name="Hikiji T."/>
            <person name="Kobatake N."/>
            <person name="Inagaki H."/>
            <person name="Ikema Y."/>
            <person name="Okamoto S."/>
            <person name="Okitani R."/>
            <person name="Kawakami T."/>
            <person name="Noguchi S."/>
            <person name="Itoh T."/>
            <person name="Shigeta K."/>
            <person name="Senba T."/>
            <person name="Matsumura K."/>
            <person name="Nakajima Y."/>
            <person name="Mizuno T."/>
            <person name="Morinaga M."/>
            <person name="Sasaki M."/>
            <person name="Togashi T."/>
            <person name="Oyama M."/>
            <person name="Hata H."/>
            <person name="Watanabe M."/>
            <person name="Komatsu T."/>
            <person name="Mizushima-Sugano J."/>
            <person name="Satoh T."/>
            <person name="Shirai Y."/>
            <person name="Takahashi Y."/>
            <person name="Nakagawa K."/>
            <person name="Okumura K."/>
            <person name="Nagase T."/>
            <person name="Nomura N."/>
            <person name="Kikuchi H."/>
            <person name="Masuho Y."/>
            <person name="Yamashita R."/>
            <person name="Nakai K."/>
            <person name="Yada T."/>
            <person name="Nakamura Y."/>
            <person name="Ohara O."/>
            <person name="Isogai T."/>
            <person name="Sugano S."/>
        </authorList>
    </citation>
    <scope>NUCLEOTIDE SEQUENCE [LARGE SCALE MRNA]</scope>
    <scope>VARIANT ILE-21</scope>
</reference>
<reference key="4">
    <citation type="submission" date="2005-09" db="EMBL/GenBank/DDBJ databases">
        <authorList>
            <person name="Mural R.J."/>
            <person name="Istrail S."/>
            <person name="Sutton G.G."/>
            <person name="Florea L."/>
            <person name="Halpern A.L."/>
            <person name="Mobarry C.M."/>
            <person name="Lippert R."/>
            <person name="Walenz B."/>
            <person name="Shatkay H."/>
            <person name="Dew I."/>
            <person name="Miller J.R."/>
            <person name="Flanigan M.J."/>
            <person name="Edwards N.J."/>
            <person name="Bolanos R."/>
            <person name="Fasulo D."/>
            <person name="Halldorsson B.V."/>
            <person name="Hannenhalli S."/>
            <person name="Turner R."/>
            <person name="Yooseph S."/>
            <person name="Lu F."/>
            <person name="Nusskern D.R."/>
            <person name="Shue B.C."/>
            <person name="Zheng X.H."/>
            <person name="Zhong F."/>
            <person name="Delcher A.L."/>
            <person name="Huson D.H."/>
            <person name="Kravitz S.A."/>
            <person name="Mouchard L."/>
            <person name="Reinert K."/>
            <person name="Remington K.A."/>
            <person name="Clark A.G."/>
            <person name="Waterman M.S."/>
            <person name="Eichler E.E."/>
            <person name="Adams M.D."/>
            <person name="Hunkapiller M.W."/>
            <person name="Myers E.W."/>
            <person name="Venter J.C."/>
        </authorList>
    </citation>
    <scope>NUCLEOTIDE SEQUENCE [LARGE SCALE GENOMIC DNA]</scope>
</reference>
<reference key="5">
    <citation type="journal article" date="2004" name="Genome Res.">
        <title>The status, quality, and expansion of the NIH full-length cDNA project: the Mammalian Gene Collection (MGC).</title>
        <authorList>
            <consortium name="The MGC Project Team"/>
        </authorList>
    </citation>
    <scope>NUCLEOTIDE SEQUENCE [LARGE SCALE MRNA]</scope>
    <source>
        <tissue>Cerebellum</tissue>
    </source>
</reference>
<comment type="function">
    <text evidence="1">Potent vasoconstrictor.</text>
</comment>
<comment type="subcellular location">
    <subcellularLocation>
        <location evidence="1">Secreted</location>
    </subcellularLocation>
</comment>
<comment type="similarity">
    <text evidence="6">Belongs to the urotensin-2 family.</text>
</comment>